<name>TMEDE_DROPS</name>
<proteinExistence type="inferred from homology"/>
<sequence length="216" mass="25168">MRDQFICLALLLCALHSACGLYFHISETERKCFIEEVPDETTVIVNYKVELYDPRSNGFMPSSPGIGMHVEVRDSDDKIILSRVYSSQGRISFTSHTPGEHVICMYSNSTAWFSGAQLRVHLDIQVGEHAIDYANVAQKEKLTELQLRIRQLLDQVEQITKEQNYQRYREERFRHTSESTNSRVLWWSLAQTLVLVCMGFWQMRHLKSFFEAKKLV</sequence>
<reference evidence="5" key="1">
    <citation type="journal article" date="2005" name="Genome Res.">
        <title>Comparative genome sequencing of Drosophila pseudoobscura: chromosomal, gene, and cis-element evolution.</title>
        <authorList>
            <person name="Richards S."/>
            <person name="Liu Y."/>
            <person name="Bettencourt B.R."/>
            <person name="Hradecky P."/>
            <person name="Letovsky S."/>
            <person name="Nielsen R."/>
            <person name="Thornton K."/>
            <person name="Hubisz M.J."/>
            <person name="Chen R."/>
            <person name="Meisel R.P."/>
            <person name="Couronne O."/>
            <person name="Hua S."/>
            <person name="Smith M.A."/>
            <person name="Zhang P."/>
            <person name="Liu J."/>
            <person name="Bussemaker H.J."/>
            <person name="van Batenburg M.F."/>
            <person name="Howells S.L."/>
            <person name="Scherer S.E."/>
            <person name="Sodergren E."/>
            <person name="Matthews B.B."/>
            <person name="Crosby M.A."/>
            <person name="Schroeder A.J."/>
            <person name="Ortiz-Barrientos D."/>
            <person name="Rives C.M."/>
            <person name="Metzker M.L."/>
            <person name="Muzny D.M."/>
            <person name="Scott G."/>
            <person name="Steffen D."/>
            <person name="Wheeler D.A."/>
            <person name="Worley K.C."/>
            <person name="Havlak P."/>
            <person name="Durbin K.J."/>
            <person name="Egan A."/>
            <person name="Gill R."/>
            <person name="Hume J."/>
            <person name="Morgan M.B."/>
            <person name="Miner G."/>
            <person name="Hamilton C."/>
            <person name="Huang Y."/>
            <person name="Waldron L."/>
            <person name="Verduzco D."/>
            <person name="Clerc-Blankenburg K.P."/>
            <person name="Dubchak I."/>
            <person name="Noor M.A.F."/>
            <person name="Anderson W."/>
            <person name="White K.P."/>
            <person name="Clark A.G."/>
            <person name="Schaeffer S.W."/>
            <person name="Gelbart W.M."/>
            <person name="Weinstock G.M."/>
            <person name="Gibbs R.A."/>
        </authorList>
    </citation>
    <scope>NUCLEOTIDE SEQUENCE [LARGE SCALE GENOMIC DNA]</scope>
    <source>
        <strain>MV2-25 / Tucson 14011-0121.94</strain>
    </source>
</reference>
<evidence type="ECO:0000250" key="1"/>
<evidence type="ECO:0000250" key="2">
    <source>
        <dbReference type="UniProtKB" id="Q8SXY6"/>
    </source>
</evidence>
<evidence type="ECO:0000255" key="3"/>
<evidence type="ECO:0000255" key="4">
    <source>
        <dbReference type="PROSITE-ProRule" id="PRU00096"/>
    </source>
</evidence>
<evidence type="ECO:0000312" key="5">
    <source>
        <dbReference type="EMBL" id="EAL28800.1"/>
    </source>
</evidence>
<feature type="signal peptide" evidence="3">
    <location>
        <begin position="1"/>
        <end position="20"/>
    </location>
</feature>
<feature type="chain" id="PRO_0000393930" description="Transmembrane emp24 domain-containing protein eca" evidence="3">
    <location>
        <begin position="21"/>
        <end position="216"/>
    </location>
</feature>
<feature type="topological domain" description="Lumenal" evidence="3">
    <location>
        <begin position="21"/>
        <end position="182"/>
    </location>
</feature>
<feature type="transmembrane region" description="Helical" evidence="3">
    <location>
        <begin position="183"/>
        <end position="203"/>
    </location>
</feature>
<feature type="topological domain" description="Cytoplasmic" evidence="3">
    <location>
        <begin position="204"/>
        <end position="216"/>
    </location>
</feature>
<feature type="domain" description="GOLD" evidence="4">
    <location>
        <begin position="30"/>
        <end position="126"/>
    </location>
</feature>
<feature type="coiled-coil region" evidence="3">
    <location>
        <begin position="134"/>
        <end position="164"/>
    </location>
</feature>
<feature type="short sequence motif" description="Prevents secretion from ER" evidence="3">
    <location>
        <begin position="213"/>
        <end position="216"/>
    </location>
</feature>
<keyword id="KW-0175">Coiled coil</keyword>
<keyword id="KW-0217">Developmental protein</keyword>
<keyword id="KW-0256">Endoplasmic reticulum</keyword>
<keyword id="KW-0472">Membrane</keyword>
<keyword id="KW-1185">Reference proteome</keyword>
<keyword id="KW-0732">Signal</keyword>
<keyword id="KW-0812">Transmembrane</keyword>
<keyword id="KW-1133">Transmembrane helix</keyword>
<dbReference type="EMBL" id="CM000070">
    <property type="protein sequence ID" value="EAL28800.1"/>
    <property type="molecule type" value="Genomic_DNA"/>
</dbReference>
<dbReference type="RefSeq" id="XP_001359650.1">
    <property type="nucleotide sequence ID" value="XM_001359613.4"/>
</dbReference>
<dbReference type="SMR" id="Q295B2"/>
<dbReference type="FunCoup" id="Q295B2">
    <property type="interactions" value="1162"/>
</dbReference>
<dbReference type="STRING" id="46245.Q295B2"/>
<dbReference type="EnsemblMetazoa" id="FBtr0282860">
    <property type="protein sequence ID" value="FBpp0281298"/>
    <property type="gene ID" value="FBgn0077297"/>
</dbReference>
<dbReference type="GeneID" id="4802805"/>
<dbReference type="KEGG" id="dpo:4802805"/>
<dbReference type="CTD" id="41177"/>
<dbReference type="eggNOG" id="KOG1690">
    <property type="taxonomic scope" value="Eukaryota"/>
</dbReference>
<dbReference type="HOGENOM" id="CLU_066963_2_2_1"/>
<dbReference type="InParanoid" id="Q295B2"/>
<dbReference type="OMA" id="GATCAWQ"/>
<dbReference type="PhylomeDB" id="Q295B2"/>
<dbReference type="Proteomes" id="UP000001819">
    <property type="component" value="Chromosome 2"/>
</dbReference>
<dbReference type="Bgee" id="FBgn0077297">
    <property type="expression patterns" value="Expressed in male reproductive system and 3 other cell types or tissues"/>
</dbReference>
<dbReference type="GO" id="GO:0005789">
    <property type="term" value="C:endoplasmic reticulum membrane"/>
    <property type="evidence" value="ECO:0007669"/>
    <property type="project" value="UniProtKB-SubCell"/>
</dbReference>
<dbReference type="GO" id="GO:0009953">
    <property type="term" value="P:dorsal/ventral pattern formation"/>
    <property type="evidence" value="ECO:0000250"/>
    <property type="project" value="UniProtKB"/>
</dbReference>
<dbReference type="InterPro" id="IPR015720">
    <property type="entry name" value="Emp24-like"/>
</dbReference>
<dbReference type="InterPro" id="IPR009038">
    <property type="entry name" value="GOLD_dom"/>
</dbReference>
<dbReference type="PANTHER" id="PTHR22811">
    <property type="entry name" value="TRANSMEMBRANE EMP24 DOMAIN-CONTAINING PROTEIN"/>
    <property type="match status" value="1"/>
</dbReference>
<dbReference type="Pfam" id="PF01105">
    <property type="entry name" value="EMP24_GP25L"/>
    <property type="match status" value="1"/>
</dbReference>
<dbReference type="SMART" id="SM01190">
    <property type="entry name" value="EMP24_GP25L"/>
    <property type="match status" value="1"/>
</dbReference>
<dbReference type="PROSITE" id="PS50866">
    <property type="entry name" value="GOLD"/>
    <property type="match status" value="1"/>
</dbReference>
<gene>
    <name evidence="2" type="primary">eca</name>
    <name type="ORF">GA17284</name>
</gene>
<organism>
    <name type="scientific">Drosophila pseudoobscura pseudoobscura</name>
    <name type="common">Fruit fly</name>
    <dbReference type="NCBI Taxonomy" id="46245"/>
    <lineage>
        <taxon>Eukaryota</taxon>
        <taxon>Metazoa</taxon>
        <taxon>Ecdysozoa</taxon>
        <taxon>Arthropoda</taxon>
        <taxon>Hexapoda</taxon>
        <taxon>Insecta</taxon>
        <taxon>Pterygota</taxon>
        <taxon>Neoptera</taxon>
        <taxon>Endopterygota</taxon>
        <taxon>Diptera</taxon>
        <taxon>Brachycera</taxon>
        <taxon>Muscomorpha</taxon>
        <taxon>Ephydroidea</taxon>
        <taxon>Drosophilidae</taxon>
        <taxon>Drosophila</taxon>
        <taxon>Sophophora</taxon>
    </lineage>
</organism>
<accession>Q295B2</accession>
<comment type="function">
    <text evidence="1">Eca and bai are essential, though not redundant, for dorsoventral patterning of the embryo. Specifically required during early embryogenesis for the activity of maternal tkv, while the zygotic tkv is not affected. Involved in Golgi organization (By similarity).</text>
</comment>
<comment type="subcellular location">
    <subcellularLocation>
        <location evidence="3">Endoplasmic reticulum membrane</location>
        <topology evidence="3">Single-pass type I membrane protein</topology>
    </subcellularLocation>
</comment>
<comment type="similarity">
    <text evidence="3">Belongs to the EMP24/GP25L family.</text>
</comment>
<protein>
    <recommendedName>
        <fullName evidence="2">Transmembrane emp24 domain-containing protein eca</fullName>
    </recommendedName>
</protein>